<reference key="1">
    <citation type="journal article" date="2012" name="BMC Microbiol.">
        <title>Genome sequence of Desulfitobacterium hafniense DCB-2, a Gram-positive anaerobe capable of dehalogenation and metal reduction.</title>
        <authorList>
            <person name="Kim S.H."/>
            <person name="Harzman C."/>
            <person name="Davis J.K."/>
            <person name="Hutcheson R."/>
            <person name="Broderick J.B."/>
            <person name="Marsh T.L."/>
            <person name="Tiedje J.M."/>
        </authorList>
    </citation>
    <scope>NUCLEOTIDE SEQUENCE [LARGE SCALE GENOMIC DNA]</scope>
    <source>
        <strain>DSM 10664 / DCB-2</strain>
    </source>
</reference>
<evidence type="ECO:0000255" key="1">
    <source>
        <dbReference type="HAMAP-Rule" id="MF_00178"/>
    </source>
</evidence>
<sequence>MMTYEGKLIAEGLKFGIVAARFNEFITNKLVGGALDALLRHGVAESDIEIAWVPGAFEIPLVAQKMAETKKYDAIICLGAVIRGATPHFDFVSAEVSKGVAHVGLETKLPVVFGVLTTDTIEQAIERAGTKAGNKGFDSAITAIETVNLLKMIQ</sequence>
<keyword id="KW-0686">Riboflavin biosynthesis</keyword>
<keyword id="KW-0808">Transferase</keyword>
<feature type="chain" id="PRO_1000195478" description="6,7-dimethyl-8-ribityllumazine synthase">
    <location>
        <begin position="1"/>
        <end position="154"/>
    </location>
</feature>
<feature type="active site" description="Proton donor" evidence="1">
    <location>
        <position position="88"/>
    </location>
</feature>
<feature type="binding site" evidence="1">
    <location>
        <position position="22"/>
    </location>
    <ligand>
        <name>5-amino-6-(D-ribitylamino)uracil</name>
        <dbReference type="ChEBI" id="CHEBI:15934"/>
    </ligand>
</feature>
<feature type="binding site" evidence="1">
    <location>
        <begin position="56"/>
        <end position="58"/>
    </location>
    <ligand>
        <name>5-amino-6-(D-ribitylamino)uracil</name>
        <dbReference type="ChEBI" id="CHEBI:15934"/>
    </ligand>
</feature>
<feature type="binding site" evidence="1">
    <location>
        <begin position="80"/>
        <end position="82"/>
    </location>
    <ligand>
        <name>5-amino-6-(D-ribitylamino)uracil</name>
        <dbReference type="ChEBI" id="CHEBI:15934"/>
    </ligand>
</feature>
<feature type="binding site" evidence="1">
    <location>
        <begin position="85"/>
        <end position="86"/>
    </location>
    <ligand>
        <name>(2S)-2-hydroxy-3-oxobutyl phosphate</name>
        <dbReference type="ChEBI" id="CHEBI:58830"/>
    </ligand>
</feature>
<feature type="binding site" evidence="1">
    <location>
        <position position="113"/>
    </location>
    <ligand>
        <name>5-amino-6-(D-ribitylamino)uracil</name>
        <dbReference type="ChEBI" id="CHEBI:15934"/>
    </ligand>
</feature>
<feature type="binding site" evidence="1">
    <location>
        <position position="127"/>
    </location>
    <ligand>
        <name>(2S)-2-hydroxy-3-oxobutyl phosphate</name>
        <dbReference type="ChEBI" id="CHEBI:58830"/>
    </ligand>
</feature>
<dbReference type="EC" id="2.5.1.78" evidence="1"/>
<dbReference type="EMBL" id="CP001336">
    <property type="protein sequence ID" value="ACL20835.1"/>
    <property type="molecule type" value="Genomic_DNA"/>
</dbReference>
<dbReference type="SMR" id="B8FXB6"/>
<dbReference type="KEGG" id="dhd:Dhaf_2811"/>
<dbReference type="HOGENOM" id="CLU_089358_1_1_9"/>
<dbReference type="UniPathway" id="UPA00275">
    <property type="reaction ID" value="UER00404"/>
</dbReference>
<dbReference type="Proteomes" id="UP000007726">
    <property type="component" value="Chromosome"/>
</dbReference>
<dbReference type="GO" id="GO:0005829">
    <property type="term" value="C:cytosol"/>
    <property type="evidence" value="ECO:0007669"/>
    <property type="project" value="TreeGrafter"/>
</dbReference>
<dbReference type="GO" id="GO:0009349">
    <property type="term" value="C:riboflavin synthase complex"/>
    <property type="evidence" value="ECO:0007669"/>
    <property type="project" value="InterPro"/>
</dbReference>
<dbReference type="GO" id="GO:0000906">
    <property type="term" value="F:6,7-dimethyl-8-ribityllumazine synthase activity"/>
    <property type="evidence" value="ECO:0007669"/>
    <property type="project" value="UniProtKB-UniRule"/>
</dbReference>
<dbReference type="GO" id="GO:0009231">
    <property type="term" value="P:riboflavin biosynthetic process"/>
    <property type="evidence" value="ECO:0007669"/>
    <property type="project" value="UniProtKB-UniRule"/>
</dbReference>
<dbReference type="CDD" id="cd09209">
    <property type="entry name" value="Lumazine_synthase-I"/>
    <property type="match status" value="1"/>
</dbReference>
<dbReference type="FunFam" id="3.40.50.960:FF:000001">
    <property type="entry name" value="6,7-dimethyl-8-ribityllumazine synthase"/>
    <property type="match status" value="1"/>
</dbReference>
<dbReference type="Gene3D" id="3.40.50.960">
    <property type="entry name" value="Lumazine/riboflavin synthase"/>
    <property type="match status" value="1"/>
</dbReference>
<dbReference type="HAMAP" id="MF_00178">
    <property type="entry name" value="Lumazine_synth"/>
    <property type="match status" value="1"/>
</dbReference>
<dbReference type="InterPro" id="IPR034964">
    <property type="entry name" value="LS"/>
</dbReference>
<dbReference type="InterPro" id="IPR002180">
    <property type="entry name" value="LS/RS"/>
</dbReference>
<dbReference type="InterPro" id="IPR036467">
    <property type="entry name" value="LS/RS_sf"/>
</dbReference>
<dbReference type="NCBIfam" id="TIGR00114">
    <property type="entry name" value="lumazine-synth"/>
    <property type="match status" value="1"/>
</dbReference>
<dbReference type="NCBIfam" id="NF000812">
    <property type="entry name" value="PRK00061.1-4"/>
    <property type="match status" value="1"/>
</dbReference>
<dbReference type="PANTHER" id="PTHR21058:SF0">
    <property type="entry name" value="6,7-DIMETHYL-8-RIBITYLLUMAZINE SYNTHASE"/>
    <property type="match status" value="1"/>
</dbReference>
<dbReference type="PANTHER" id="PTHR21058">
    <property type="entry name" value="6,7-DIMETHYL-8-RIBITYLLUMAZINE SYNTHASE DMRL SYNTHASE LUMAZINE SYNTHASE"/>
    <property type="match status" value="1"/>
</dbReference>
<dbReference type="Pfam" id="PF00885">
    <property type="entry name" value="DMRL_synthase"/>
    <property type="match status" value="1"/>
</dbReference>
<dbReference type="SUPFAM" id="SSF52121">
    <property type="entry name" value="Lumazine synthase"/>
    <property type="match status" value="1"/>
</dbReference>
<gene>
    <name evidence="1" type="primary">ribH</name>
    <name type="ordered locus">Dhaf_2811</name>
</gene>
<organism>
    <name type="scientific">Desulfitobacterium hafniense (strain DSM 10664 / DCB-2)</name>
    <dbReference type="NCBI Taxonomy" id="272564"/>
    <lineage>
        <taxon>Bacteria</taxon>
        <taxon>Bacillati</taxon>
        <taxon>Bacillota</taxon>
        <taxon>Clostridia</taxon>
        <taxon>Eubacteriales</taxon>
        <taxon>Desulfitobacteriaceae</taxon>
        <taxon>Desulfitobacterium</taxon>
    </lineage>
</organism>
<name>RISB_DESHD</name>
<comment type="function">
    <text evidence="1">Catalyzes the formation of 6,7-dimethyl-8-ribityllumazine by condensation of 5-amino-6-(D-ribitylamino)uracil with 3,4-dihydroxy-2-butanone 4-phosphate. This is the penultimate step in the biosynthesis of riboflavin.</text>
</comment>
<comment type="catalytic activity">
    <reaction evidence="1">
        <text>(2S)-2-hydroxy-3-oxobutyl phosphate + 5-amino-6-(D-ribitylamino)uracil = 6,7-dimethyl-8-(1-D-ribityl)lumazine + phosphate + 2 H2O + H(+)</text>
        <dbReference type="Rhea" id="RHEA:26152"/>
        <dbReference type="ChEBI" id="CHEBI:15377"/>
        <dbReference type="ChEBI" id="CHEBI:15378"/>
        <dbReference type="ChEBI" id="CHEBI:15934"/>
        <dbReference type="ChEBI" id="CHEBI:43474"/>
        <dbReference type="ChEBI" id="CHEBI:58201"/>
        <dbReference type="ChEBI" id="CHEBI:58830"/>
        <dbReference type="EC" id="2.5.1.78"/>
    </reaction>
</comment>
<comment type="pathway">
    <text evidence="1">Cofactor biosynthesis; riboflavin biosynthesis; riboflavin from 2-hydroxy-3-oxobutyl phosphate and 5-amino-6-(D-ribitylamino)uracil: step 1/2.</text>
</comment>
<comment type="similarity">
    <text evidence="1">Belongs to the DMRL synthase family.</text>
</comment>
<accession>B8FXB6</accession>
<protein>
    <recommendedName>
        <fullName evidence="1">6,7-dimethyl-8-ribityllumazine synthase</fullName>
        <shortName evidence="1">DMRL synthase</shortName>
        <shortName evidence="1">LS</shortName>
        <shortName evidence="1">Lumazine synthase</shortName>
        <ecNumber evidence="1">2.5.1.78</ecNumber>
    </recommendedName>
</protein>
<proteinExistence type="inferred from homology"/>